<sequence>MNIIDQVKQTLVEEIAASINKAGLADEIPDIKIEVPKDTKNGDYATNIAMVLTKIAKRNPREIAQAIVDNLDTEKAHVKQIDIAGPGFINFYLDNQYLTAIIPEAIEKGDQFGHVNESKGQNVLLEYVSANPTGDLHIGHARNAAVGDALANILTAAGYNVTREYYINDAGNQITNLARSIETHFFEALGDNSYSMPEDGYNGKDIIEIGKDLAEKHPEIKDYSEEARLKEFRKLGVEYEMAKLKNDLAEFNTHFDNWFSETSLYEKGEILEVLAKMKELGYTYEADGATWLRTTDFKDDKDRVLIKNDGTYTYFLPDIAYHFDKVKRGNDILIDLFGADHHGYINRLKASLETFGVDSNRLEIQIMQMVRLMENGKEVKMSKRTGNAITLREIMDEVGVDAARYFLTMRSPDSHFDFDMELAKEQSQDNPVYYAQYAHARICSILKQAKEQGIEVTAANDFTTITNEKAIELLKKVADFEPTIESAAEHRSAHRITNYIQDLAAHFHKFYNAEKVLTDDIEKTKAHVAMIEAVRITLKNALAMVGVSAPESM</sequence>
<comment type="catalytic activity">
    <reaction evidence="1">
        <text>tRNA(Arg) + L-arginine + ATP = L-arginyl-tRNA(Arg) + AMP + diphosphate</text>
        <dbReference type="Rhea" id="RHEA:20301"/>
        <dbReference type="Rhea" id="RHEA-COMP:9658"/>
        <dbReference type="Rhea" id="RHEA-COMP:9673"/>
        <dbReference type="ChEBI" id="CHEBI:30616"/>
        <dbReference type="ChEBI" id="CHEBI:32682"/>
        <dbReference type="ChEBI" id="CHEBI:33019"/>
        <dbReference type="ChEBI" id="CHEBI:78442"/>
        <dbReference type="ChEBI" id="CHEBI:78513"/>
        <dbReference type="ChEBI" id="CHEBI:456215"/>
        <dbReference type="EC" id="6.1.1.19"/>
    </reaction>
</comment>
<comment type="subunit">
    <text evidence="1">Monomer.</text>
</comment>
<comment type="subcellular location">
    <subcellularLocation>
        <location evidence="1">Cytoplasm</location>
    </subcellularLocation>
</comment>
<comment type="similarity">
    <text evidence="1">Belongs to the class-I aminoacyl-tRNA synthetase family.</text>
</comment>
<feature type="chain" id="PRO_1000018125" description="Arginine--tRNA ligase">
    <location>
        <begin position="1"/>
        <end position="553"/>
    </location>
</feature>
<feature type="short sequence motif" description="'HIGH' region">
    <location>
        <begin position="130"/>
        <end position="140"/>
    </location>
</feature>
<dbReference type="EC" id="6.1.1.19" evidence="1"/>
<dbReference type="EMBL" id="AP009324">
    <property type="protein sequence ID" value="BAF77488.1"/>
    <property type="molecule type" value="Genomic_DNA"/>
</dbReference>
<dbReference type="RefSeq" id="WP_001021134.1">
    <property type="nucleotide sequence ID" value="NC_009782.1"/>
</dbReference>
<dbReference type="SMR" id="A7WZ56"/>
<dbReference type="KEGG" id="saw:SAHV_0605"/>
<dbReference type="HOGENOM" id="CLU_006406_0_1_9"/>
<dbReference type="GO" id="GO:0005737">
    <property type="term" value="C:cytoplasm"/>
    <property type="evidence" value="ECO:0007669"/>
    <property type="project" value="UniProtKB-SubCell"/>
</dbReference>
<dbReference type="GO" id="GO:0004814">
    <property type="term" value="F:arginine-tRNA ligase activity"/>
    <property type="evidence" value="ECO:0007669"/>
    <property type="project" value="UniProtKB-UniRule"/>
</dbReference>
<dbReference type="GO" id="GO:0005524">
    <property type="term" value="F:ATP binding"/>
    <property type="evidence" value="ECO:0007669"/>
    <property type="project" value="UniProtKB-UniRule"/>
</dbReference>
<dbReference type="GO" id="GO:0006420">
    <property type="term" value="P:arginyl-tRNA aminoacylation"/>
    <property type="evidence" value="ECO:0007669"/>
    <property type="project" value="UniProtKB-UniRule"/>
</dbReference>
<dbReference type="CDD" id="cd00671">
    <property type="entry name" value="ArgRS_core"/>
    <property type="match status" value="1"/>
</dbReference>
<dbReference type="FunFam" id="1.10.730.10:FF:000008">
    <property type="entry name" value="Arginine--tRNA ligase"/>
    <property type="match status" value="1"/>
</dbReference>
<dbReference type="FunFam" id="3.30.1360.70:FF:000003">
    <property type="entry name" value="Arginine--tRNA ligase"/>
    <property type="match status" value="1"/>
</dbReference>
<dbReference type="FunFam" id="3.40.50.620:FF:000062">
    <property type="entry name" value="Arginine--tRNA ligase"/>
    <property type="match status" value="1"/>
</dbReference>
<dbReference type="Gene3D" id="3.30.1360.70">
    <property type="entry name" value="Arginyl tRNA synthetase N-terminal domain"/>
    <property type="match status" value="1"/>
</dbReference>
<dbReference type="Gene3D" id="3.40.50.620">
    <property type="entry name" value="HUPs"/>
    <property type="match status" value="1"/>
</dbReference>
<dbReference type="Gene3D" id="1.10.730.10">
    <property type="entry name" value="Isoleucyl-tRNA Synthetase, Domain 1"/>
    <property type="match status" value="1"/>
</dbReference>
<dbReference type="HAMAP" id="MF_00123">
    <property type="entry name" value="Arg_tRNA_synth"/>
    <property type="match status" value="1"/>
</dbReference>
<dbReference type="InterPro" id="IPR001412">
    <property type="entry name" value="aa-tRNA-synth_I_CS"/>
</dbReference>
<dbReference type="InterPro" id="IPR001278">
    <property type="entry name" value="Arg-tRNA-ligase"/>
</dbReference>
<dbReference type="InterPro" id="IPR005148">
    <property type="entry name" value="Arg-tRNA-synth_N"/>
</dbReference>
<dbReference type="InterPro" id="IPR036695">
    <property type="entry name" value="Arg-tRNA-synth_N_sf"/>
</dbReference>
<dbReference type="InterPro" id="IPR035684">
    <property type="entry name" value="ArgRS_core"/>
</dbReference>
<dbReference type="InterPro" id="IPR008909">
    <property type="entry name" value="DALR_anticod-bd"/>
</dbReference>
<dbReference type="InterPro" id="IPR014729">
    <property type="entry name" value="Rossmann-like_a/b/a_fold"/>
</dbReference>
<dbReference type="InterPro" id="IPR009080">
    <property type="entry name" value="tRNAsynth_Ia_anticodon-bd"/>
</dbReference>
<dbReference type="NCBIfam" id="TIGR00456">
    <property type="entry name" value="argS"/>
    <property type="match status" value="1"/>
</dbReference>
<dbReference type="PANTHER" id="PTHR11956:SF5">
    <property type="entry name" value="ARGININE--TRNA LIGASE, CYTOPLASMIC"/>
    <property type="match status" value="1"/>
</dbReference>
<dbReference type="PANTHER" id="PTHR11956">
    <property type="entry name" value="ARGINYL-TRNA SYNTHETASE"/>
    <property type="match status" value="1"/>
</dbReference>
<dbReference type="Pfam" id="PF03485">
    <property type="entry name" value="Arg_tRNA_synt_N"/>
    <property type="match status" value="1"/>
</dbReference>
<dbReference type="Pfam" id="PF05746">
    <property type="entry name" value="DALR_1"/>
    <property type="match status" value="1"/>
</dbReference>
<dbReference type="Pfam" id="PF00750">
    <property type="entry name" value="tRNA-synt_1d"/>
    <property type="match status" value="1"/>
</dbReference>
<dbReference type="PRINTS" id="PR01038">
    <property type="entry name" value="TRNASYNTHARG"/>
</dbReference>
<dbReference type="SMART" id="SM01016">
    <property type="entry name" value="Arg_tRNA_synt_N"/>
    <property type="match status" value="1"/>
</dbReference>
<dbReference type="SMART" id="SM00836">
    <property type="entry name" value="DALR_1"/>
    <property type="match status" value="1"/>
</dbReference>
<dbReference type="SUPFAM" id="SSF47323">
    <property type="entry name" value="Anticodon-binding domain of a subclass of class I aminoacyl-tRNA synthetases"/>
    <property type="match status" value="1"/>
</dbReference>
<dbReference type="SUPFAM" id="SSF55190">
    <property type="entry name" value="Arginyl-tRNA synthetase (ArgRS), N-terminal 'additional' domain"/>
    <property type="match status" value="1"/>
</dbReference>
<dbReference type="SUPFAM" id="SSF52374">
    <property type="entry name" value="Nucleotidylyl transferase"/>
    <property type="match status" value="1"/>
</dbReference>
<dbReference type="PROSITE" id="PS00178">
    <property type="entry name" value="AA_TRNA_LIGASE_I"/>
    <property type="match status" value="1"/>
</dbReference>
<protein>
    <recommendedName>
        <fullName evidence="1">Arginine--tRNA ligase</fullName>
        <ecNumber evidence="1">6.1.1.19</ecNumber>
    </recommendedName>
    <alternativeName>
        <fullName evidence="1">Arginyl-tRNA synthetase</fullName>
        <shortName evidence="1">ArgRS</shortName>
    </alternativeName>
</protein>
<name>SYR_STAA1</name>
<gene>
    <name evidence="1" type="primary">argS</name>
    <name type="ordered locus">SAHV_0605</name>
</gene>
<reference key="1">
    <citation type="journal article" date="2008" name="Antimicrob. Agents Chemother.">
        <title>Mutated response regulator graR is responsible for phenotypic conversion of Staphylococcus aureus from heterogeneous vancomycin-intermediate resistance to vancomycin-intermediate resistance.</title>
        <authorList>
            <person name="Neoh H.-M."/>
            <person name="Cui L."/>
            <person name="Yuzawa H."/>
            <person name="Takeuchi F."/>
            <person name="Matsuo M."/>
            <person name="Hiramatsu K."/>
        </authorList>
    </citation>
    <scope>NUCLEOTIDE SEQUENCE [LARGE SCALE GENOMIC DNA]</scope>
    <source>
        <strain>Mu3 / ATCC 700698</strain>
    </source>
</reference>
<keyword id="KW-0030">Aminoacyl-tRNA synthetase</keyword>
<keyword id="KW-0067">ATP-binding</keyword>
<keyword id="KW-0963">Cytoplasm</keyword>
<keyword id="KW-0436">Ligase</keyword>
<keyword id="KW-0547">Nucleotide-binding</keyword>
<keyword id="KW-0648">Protein biosynthesis</keyword>
<organism>
    <name type="scientific">Staphylococcus aureus (strain Mu3 / ATCC 700698)</name>
    <dbReference type="NCBI Taxonomy" id="418127"/>
    <lineage>
        <taxon>Bacteria</taxon>
        <taxon>Bacillati</taxon>
        <taxon>Bacillota</taxon>
        <taxon>Bacilli</taxon>
        <taxon>Bacillales</taxon>
        <taxon>Staphylococcaceae</taxon>
        <taxon>Staphylococcus</taxon>
    </lineage>
</organism>
<proteinExistence type="inferred from homology"/>
<accession>A7WZ56</accession>
<evidence type="ECO:0000255" key="1">
    <source>
        <dbReference type="HAMAP-Rule" id="MF_00123"/>
    </source>
</evidence>